<feature type="chain" id="PRO_0000055458" description="Unknown protein from spot 2D-0014M9 of 2D-PAGE of liver tissue">
    <location>
        <begin position="1"/>
        <end position="12" status="greater than"/>
    </location>
</feature>
<feature type="non-terminal residue">
    <location>
        <position position="12"/>
    </location>
</feature>
<proteinExistence type="uncertain"/>
<comment type="miscellaneous">
    <text>On the 2D-gel the determined pI of this unknown protein is: 5.0, its MW is: 11.7 kDa.</text>
</comment>
<accession>P99032</accession>
<sequence length="12" mass="1327">XDNVQDSPSXQD</sequence>
<organism>
    <name type="scientific">Mus musculus</name>
    <name type="common">Mouse</name>
    <dbReference type="NCBI Taxonomy" id="10090"/>
    <lineage>
        <taxon>Eukaryota</taxon>
        <taxon>Metazoa</taxon>
        <taxon>Chordata</taxon>
        <taxon>Craniata</taxon>
        <taxon>Vertebrata</taxon>
        <taxon>Euteleostomi</taxon>
        <taxon>Mammalia</taxon>
        <taxon>Eutheria</taxon>
        <taxon>Euarchontoglires</taxon>
        <taxon>Glires</taxon>
        <taxon>Rodentia</taxon>
        <taxon>Myomorpha</taxon>
        <taxon>Muroidea</taxon>
        <taxon>Muridae</taxon>
        <taxon>Murinae</taxon>
        <taxon>Mus</taxon>
        <taxon>Mus</taxon>
    </lineage>
</organism>
<protein>
    <recommendedName>
        <fullName>Unknown protein from spot 2D-0014M9 of 2D-PAGE of liver tissue</fullName>
    </recommendedName>
</protein>
<dbReference type="InParanoid" id="P99032"/>
<dbReference type="Proteomes" id="UP000000589">
    <property type="component" value="Unplaced"/>
</dbReference>
<reference key="1">
    <citation type="submission" date="1998-08" db="UniProtKB">
        <authorList>
            <person name="Sanchez J.-C."/>
            <person name="Rouge V."/>
            <person name="Frutiger S."/>
            <person name="Hughes G.J."/>
            <person name="Yan J.X."/>
            <person name="Hoogland C."/>
            <person name="Appel R.D."/>
            <person name="Binz P.-A."/>
            <person name="Hochstrasser D.F."/>
            <person name="Cowthorne M."/>
        </authorList>
    </citation>
    <scope>PROTEIN SEQUENCE</scope>
    <source>
        <tissue>Liver</tissue>
    </source>
</reference>
<keyword id="KW-0903">Direct protein sequencing</keyword>
<keyword id="KW-1185">Reference proteome</keyword>
<name>ULAL_MOUSE</name>